<organism>
    <name type="scientific">Rickettsia montanensis</name>
    <dbReference type="NCBI Taxonomy" id="33991"/>
    <lineage>
        <taxon>Bacteria</taxon>
        <taxon>Pseudomonadati</taxon>
        <taxon>Pseudomonadota</taxon>
        <taxon>Alphaproteobacteria</taxon>
        <taxon>Rickettsiales</taxon>
        <taxon>Rickettsiaceae</taxon>
        <taxon>Rickettsieae</taxon>
        <taxon>Rickettsia</taxon>
        <taxon>spotted fever group</taxon>
    </lineage>
</organism>
<keyword id="KW-0963">Cytoplasm</keyword>
<keyword id="KW-0251">Elongation factor</keyword>
<keyword id="KW-0342">GTP-binding</keyword>
<keyword id="KW-0378">Hydrolase</keyword>
<keyword id="KW-0460">Magnesium</keyword>
<keyword id="KW-0479">Metal-binding</keyword>
<keyword id="KW-0547">Nucleotide-binding</keyword>
<keyword id="KW-0648">Protein biosynthesis</keyword>
<comment type="function">
    <text evidence="2">GTP hydrolase that promotes the GTP-dependent binding of aminoacyl-tRNA to the A-site of ribosomes during protein biosynthesis.</text>
</comment>
<comment type="catalytic activity">
    <reaction evidence="2">
        <text>GTP + H2O = GDP + phosphate + H(+)</text>
        <dbReference type="Rhea" id="RHEA:19669"/>
        <dbReference type="ChEBI" id="CHEBI:15377"/>
        <dbReference type="ChEBI" id="CHEBI:15378"/>
        <dbReference type="ChEBI" id="CHEBI:37565"/>
        <dbReference type="ChEBI" id="CHEBI:43474"/>
        <dbReference type="ChEBI" id="CHEBI:58189"/>
        <dbReference type="EC" id="3.6.5.3"/>
    </reaction>
    <physiologicalReaction direction="left-to-right" evidence="2">
        <dbReference type="Rhea" id="RHEA:19670"/>
    </physiologicalReaction>
</comment>
<comment type="subunit">
    <text evidence="2">Monomer.</text>
</comment>
<comment type="subcellular location">
    <subcellularLocation>
        <location evidence="2">Cytoplasm</location>
    </subcellularLocation>
</comment>
<comment type="similarity">
    <text evidence="2">Belongs to the TRAFAC class translation factor GTPase superfamily. Classic translation factor GTPase family. EF-Tu/EF-1A subfamily.</text>
</comment>
<gene>
    <name evidence="2" type="primary">tuf</name>
</gene>
<reference key="1">
    <citation type="journal article" date="2002" name="Mol. Biol. Evol.">
        <title>Proliferation and deterioration of Rickettsia palindromic elements.</title>
        <authorList>
            <person name="Amiri H."/>
            <person name="Alsmark C.M."/>
            <person name="Andersson S.G.E."/>
        </authorList>
    </citation>
    <scope>NUCLEOTIDE SEQUENCE [GENOMIC DNA]</scope>
</reference>
<proteinExistence type="inferred from homology"/>
<dbReference type="EC" id="3.6.5.3" evidence="2"/>
<dbReference type="EMBL" id="AF502183">
    <property type="protein sequence ID" value="AAM90938.1"/>
    <property type="molecule type" value="Genomic_DNA"/>
</dbReference>
<dbReference type="SMR" id="Q8KTA1"/>
<dbReference type="GO" id="GO:0005737">
    <property type="term" value="C:cytoplasm"/>
    <property type="evidence" value="ECO:0007669"/>
    <property type="project" value="UniProtKB-SubCell"/>
</dbReference>
<dbReference type="GO" id="GO:0005525">
    <property type="term" value="F:GTP binding"/>
    <property type="evidence" value="ECO:0007669"/>
    <property type="project" value="UniProtKB-UniRule"/>
</dbReference>
<dbReference type="GO" id="GO:0003924">
    <property type="term" value="F:GTPase activity"/>
    <property type="evidence" value="ECO:0007669"/>
    <property type="project" value="InterPro"/>
</dbReference>
<dbReference type="GO" id="GO:0097216">
    <property type="term" value="F:guanosine tetraphosphate binding"/>
    <property type="evidence" value="ECO:0007669"/>
    <property type="project" value="UniProtKB-ARBA"/>
</dbReference>
<dbReference type="GO" id="GO:0003746">
    <property type="term" value="F:translation elongation factor activity"/>
    <property type="evidence" value="ECO:0007669"/>
    <property type="project" value="UniProtKB-UniRule"/>
</dbReference>
<dbReference type="CDD" id="cd01884">
    <property type="entry name" value="EF_Tu"/>
    <property type="match status" value="1"/>
</dbReference>
<dbReference type="CDD" id="cd03697">
    <property type="entry name" value="EFTU_II"/>
    <property type="match status" value="1"/>
</dbReference>
<dbReference type="CDD" id="cd03707">
    <property type="entry name" value="EFTU_III"/>
    <property type="match status" value="1"/>
</dbReference>
<dbReference type="FunFam" id="2.40.30.10:FF:000001">
    <property type="entry name" value="Elongation factor Tu"/>
    <property type="match status" value="1"/>
</dbReference>
<dbReference type="FunFam" id="3.40.50.300:FF:000003">
    <property type="entry name" value="Elongation factor Tu"/>
    <property type="match status" value="1"/>
</dbReference>
<dbReference type="Gene3D" id="3.40.50.300">
    <property type="entry name" value="P-loop containing nucleotide triphosphate hydrolases"/>
    <property type="match status" value="1"/>
</dbReference>
<dbReference type="Gene3D" id="2.40.30.10">
    <property type="entry name" value="Translation factors"/>
    <property type="match status" value="2"/>
</dbReference>
<dbReference type="HAMAP" id="MF_00118_B">
    <property type="entry name" value="EF_Tu_B"/>
    <property type="match status" value="1"/>
</dbReference>
<dbReference type="InterPro" id="IPR041709">
    <property type="entry name" value="EF-Tu_GTP-bd"/>
</dbReference>
<dbReference type="InterPro" id="IPR050055">
    <property type="entry name" value="EF-Tu_GTPase"/>
</dbReference>
<dbReference type="InterPro" id="IPR004161">
    <property type="entry name" value="EFTu-like_2"/>
</dbReference>
<dbReference type="InterPro" id="IPR033720">
    <property type="entry name" value="EFTU_2"/>
</dbReference>
<dbReference type="InterPro" id="IPR031157">
    <property type="entry name" value="G_TR_CS"/>
</dbReference>
<dbReference type="InterPro" id="IPR027417">
    <property type="entry name" value="P-loop_NTPase"/>
</dbReference>
<dbReference type="InterPro" id="IPR005225">
    <property type="entry name" value="Small_GTP-bd"/>
</dbReference>
<dbReference type="InterPro" id="IPR000795">
    <property type="entry name" value="T_Tr_GTP-bd_dom"/>
</dbReference>
<dbReference type="InterPro" id="IPR009000">
    <property type="entry name" value="Transl_B-barrel_sf"/>
</dbReference>
<dbReference type="InterPro" id="IPR009001">
    <property type="entry name" value="Transl_elong_EF1A/Init_IF2_C"/>
</dbReference>
<dbReference type="InterPro" id="IPR004541">
    <property type="entry name" value="Transl_elong_EFTu/EF1A_bac/org"/>
</dbReference>
<dbReference type="InterPro" id="IPR004160">
    <property type="entry name" value="Transl_elong_EFTu/EF1A_C"/>
</dbReference>
<dbReference type="NCBIfam" id="TIGR00485">
    <property type="entry name" value="EF-Tu"/>
    <property type="match status" value="1"/>
</dbReference>
<dbReference type="NCBIfam" id="NF000766">
    <property type="entry name" value="PRK00049.1"/>
    <property type="match status" value="1"/>
</dbReference>
<dbReference type="NCBIfam" id="NF009372">
    <property type="entry name" value="PRK12735.1"/>
    <property type="match status" value="1"/>
</dbReference>
<dbReference type="NCBIfam" id="NF009373">
    <property type="entry name" value="PRK12736.1"/>
    <property type="match status" value="1"/>
</dbReference>
<dbReference type="NCBIfam" id="TIGR00231">
    <property type="entry name" value="small_GTP"/>
    <property type="match status" value="1"/>
</dbReference>
<dbReference type="PANTHER" id="PTHR43721:SF22">
    <property type="entry name" value="ELONGATION FACTOR TU, MITOCHONDRIAL"/>
    <property type="match status" value="1"/>
</dbReference>
<dbReference type="PANTHER" id="PTHR43721">
    <property type="entry name" value="ELONGATION FACTOR TU-RELATED"/>
    <property type="match status" value="1"/>
</dbReference>
<dbReference type="Pfam" id="PF00009">
    <property type="entry name" value="GTP_EFTU"/>
    <property type="match status" value="1"/>
</dbReference>
<dbReference type="Pfam" id="PF03144">
    <property type="entry name" value="GTP_EFTU_D2"/>
    <property type="match status" value="1"/>
</dbReference>
<dbReference type="Pfam" id="PF03143">
    <property type="entry name" value="GTP_EFTU_D3"/>
    <property type="match status" value="1"/>
</dbReference>
<dbReference type="PRINTS" id="PR00315">
    <property type="entry name" value="ELONGATNFCT"/>
</dbReference>
<dbReference type="SUPFAM" id="SSF50465">
    <property type="entry name" value="EF-Tu/eEF-1alpha/eIF2-gamma C-terminal domain"/>
    <property type="match status" value="1"/>
</dbReference>
<dbReference type="SUPFAM" id="SSF52540">
    <property type="entry name" value="P-loop containing nucleoside triphosphate hydrolases"/>
    <property type="match status" value="1"/>
</dbReference>
<dbReference type="SUPFAM" id="SSF50447">
    <property type="entry name" value="Translation proteins"/>
    <property type="match status" value="1"/>
</dbReference>
<dbReference type="PROSITE" id="PS00301">
    <property type="entry name" value="G_TR_1"/>
    <property type="match status" value="1"/>
</dbReference>
<dbReference type="PROSITE" id="PS51722">
    <property type="entry name" value="G_TR_2"/>
    <property type="match status" value="1"/>
</dbReference>
<evidence type="ECO:0000250" key="1"/>
<evidence type="ECO:0000255" key="2">
    <source>
        <dbReference type="HAMAP-Rule" id="MF_00118"/>
    </source>
</evidence>
<sequence length="394" mass="42902">MAKAKFERTKPHVNIGTIGHVDHGKTSLTAAITMVLAKTGGAQATAYDQIDAAPEEKERGITISTAHVEYETKNRHYAHVDCPGHADYVKNMITGAAQMDGAILVVSAADGPMPQTREHILLAKQVGVPAMVVFLNKVDMVDDSDLLELVEMEVRELLSKYGFPGDEIPIIKGSALQALEGKPEGEKAINELMDAVDSYIPQPVRATDKPFLMPIEDVFSISGRSTVVTGRVESGIIKVGEEIEIVGLKDTQKTTCTGVEMFRKLLDEGQAGDNVGILLRGTKREEVERGQVLAKPGSIKPHDKFEAEVYVLSKEEGGRHTPFTNDYRPQFYFRTTDVTGTIKLPADKQMVMPGDNATFTVELIKPIAMQEGLKFSIREGGRTVGAGVVTKINN</sequence>
<feature type="chain" id="PRO_0000091376" description="Elongation factor Tu">
    <location>
        <begin position="1"/>
        <end position="394"/>
    </location>
</feature>
<feature type="domain" description="tr-type G">
    <location>
        <begin position="10"/>
        <end position="204"/>
    </location>
</feature>
<feature type="region of interest" description="G1" evidence="1">
    <location>
        <begin position="19"/>
        <end position="26"/>
    </location>
</feature>
<feature type="region of interest" description="G2" evidence="1">
    <location>
        <begin position="60"/>
        <end position="64"/>
    </location>
</feature>
<feature type="region of interest" description="G3" evidence="1">
    <location>
        <begin position="81"/>
        <end position="84"/>
    </location>
</feature>
<feature type="region of interest" description="G4" evidence="1">
    <location>
        <begin position="136"/>
        <end position="139"/>
    </location>
</feature>
<feature type="region of interest" description="G5" evidence="1">
    <location>
        <begin position="174"/>
        <end position="176"/>
    </location>
</feature>
<feature type="binding site" evidence="2">
    <location>
        <begin position="19"/>
        <end position="26"/>
    </location>
    <ligand>
        <name>GTP</name>
        <dbReference type="ChEBI" id="CHEBI:37565"/>
    </ligand>
</feature>
<feature type="binding site" evidence="2">
    <location>
        <position position="26"/>
    </location>
    <ligand>
        <name>Mg(2+)</name>
        <dbReference type="ChEBI" id="CHEBI:18420"/>
    </ligand>
</feature>
<feature type="binding site" evidence="2">
    <location>
        <begin position="81"/>
        <end position="85"/>
    </location>
    <ligand>
        <name>GTP</name>
        <dbReference type="ChEBI" id="CHEBI:37565"/>
    </ligand>
</feature>
<feature type="binding site" evidence="2">
    <location>
        <begin position="136"/>
        <end position="139"/>
    </location>
    <ligand>
        <name>GTP</name>
        <dbReference type="ChEBI" id="CHEBI:37565"/>
    </ligand>
</feature>
<name>EFTU_RICMO</name>
<accession>Q8KTA1</accession>
<protein>
    <recommendedName>
        <fullName evidence="2">Elongation factor Tu</fullName>
        <shortName evidence="2">EF-Tu</shortName>
        <ecNumber evidence="2">3.6.5.3</ecNumber>
    </recommendedName>
</protein>